<dbReference type="EC" id="2.3.1.82" evidence="3 4"/>
<dbReference type="EMBL" id="AF144880">
    <property type="protein sequence ID" value="AAF03531.1"/>
    <property type="molecule type" value="Genomic_DNA"/>
</dbReference>
<dbReference type="EMBL" id="AF144881">
    <property type="protein sequence ID" value="AAF03532.1"/>
    <property type="molecule type" value="Genomic_DNA"/>
</dbReference>
<dbReference type="RefSeq" id="WP_000354853.1">
    <property type="nucleotide sequence ID" value="NZ_JYXI01000003.1"/>
</dbReference>
<dbReference type="PDB" id="1S3Z">
    <property type="method" value="X-ray"/>
    <property type="resolution" value="2.00 A"/>
    <property type="chains" value="A/B=1-145"/>
</dbReference>
<dbReference type="PDB" id="1S5K">
    <property type="method" value="X-ray"/>
    <property type="resolution" value="2.40 A"/>
    <property type="chains" value="A/B=1-145"/>
</dbReference>
<dbReference type="PDB" id="1S60">
    <property type="method" value="X-ray"/>
    <property type="resolution" value="3.00 A"/>
    <property type="chains" value="A=1-145"/>
</dbReference>
<dbReference type="PDB" id="2VBQ">
    <property type="method" value="X-ray"/>
    <property type="resolution" value="2.00 A"/>
    <property type="chains" value="A/B=1-145"/>
</dbReference>
<dbReference type="PDBsum" id="1S3Z"/>
<dbReference type="PDBsum" id="1S5K"/>
<dbReference type="PDBsum" id="1S60"/>
<dbReference type="PDBsum" id="2VBQ"/>
<dbReference type="SMR" id="Q9R381"/>
<dbReference type="DrugBank" id="DB01992">
    <property type="generic name" value="Coenzyme A"/>
</dbReference>
<dbReference type="DrugBank" id="DB03615">
    <property type="generic name" value="Ribostamycin"/>
</dbReference>
<dbReference type="CARD" id="ARO:3002569">
    <property type="molecule name" value="AAC(6')-Iy"/>
    <property type="mechanism identifier" value="ARO:0001004"/>
    <property type="mechanism name" value="antibiotic inactivation"/>
</dbReference>
<dbReference type="KEGG" id="ag:AAF03531"/>
<dbReference type="PATRIC" id="fig|149539.391.peg.3256"/>
<dbReference type="EvolutionaryTrace" id="Q9R381"/>
<dbReference type="GO" id="GO:0047663">
    <property type="term" value="F:aminoglycoside 6'-N-acetyltransferase activity"/>
    <property type="evidence" value="ECO:0000314"/>
    <property type="project" value="UniProtKB"/>
</dbReference>
<dbReference type="GO" id="GO:0042803">
    <property type="term" value="F:protein homodimerization activity"/>
    <property type="evidence" value="ECO:0000314"/>
    <property type="project" value="UniProtKB"/>
</dbReference>
<dbReference type="GO" id="GO:0006084">
    <property type="term" value="P:acetyl-CoA metabolic process"/>
    <property type="evidence" value="ECO:0000314"/>
    <property type="project" value="UniProtKB"/>
</dbReference>
<dbReference type="GO" id="GO:0046677">
    <property type="term" value="P:response to antibiotic"/>
    <property type="evidence" value="ECO:0000314"/>
    <property type="project" value="UniProtKB"/>
</dbReference>
<dbReference type="CDD" id="cd04301">
    <property type="entry name" value="NAT_SF"/>
    <property type="match status" value="1"/>
</dbReference>
<dbReference type="FunFam" id="3.40.630.30:FF:000111">
    <property type="entry name" value="Aminoglycoside N(6')-acetyltransferase type 1"/>
    <property type="match status" value="1"/>
</dbReference>
<dbReference type="Gene3D" id="3.40.630.30">
    <property type="match status" value="1"/>
</dbReference>
<dbReference type="InterPro" id="IPR016181">
    <property type="entry name" value="Acyl_CoA_acyltransferase"/>
</dbReference>
<dbReference type="InterPro" id="IPR024170">
    <property type="entry name" value="Aminoglycoside_N6-AcTrfrase"/>
</dbReference>
<dbReference type="InterPro" id="IPR050832">
    <property type="entry name" value="Bact_Acetyltransf"/>
</dbReference>
<dbReference type="InterPro" id="IPR000182">
    <property type="entry name" value="GNAT_dom"/>
</dbReference>
<dbReference type="NCBIfam" id="NF043067">
    <property type="entry name" value="AAC_6p_group_E"/>
    <property type="match status" value="1"/>
</dbReference>
<dbReference type="NCBIfam" id="NF000140">
    <property type="entry name" value="AAC_6p_Salmo"/>
    <property type="match status" value="1"/>
</dbReference>
<dbReference type="PANTHER" id="PTHR43877">
    <property type="entry name" value="AMINOALKYLPHOSPHONATE N-ACETYLTRANSFERASE-RELATED-RELATED"/>
    <property type="match status" value="1"/>
</dbReference>
<dbReference type="Pfam" id="PF00583">
    <property type="entry name" value="Acetyltransf_1"/>
    <property type="match status" value="1"/>
</dbReference>
<dbReference type="PIRSF" id="PIRSF000452">
    <property type="entry name" value="6-N-acetyltransf"/>
    <property type="match status" value="1"/>
</dbReference>
<dbReference type="SUPFAM" id="SSF55729">
    <property type="entry name" value="Acyl-CoA N-acyltransferases (Nat)"/>
    <property type="match status" value="1"/>
</dbReference>
<dbReference type="PROSITE" id="PS51186">
    <property type="entry name" value="GNAT"/>
    <property type="match status" value="1"/>
</dbReference>
<evidence type="ECO:0000250" key="1">
    <source>
        <dbReference type="UniProtKB" id="P50858"/>
    </source>
</evidence>
<evidence type="ECO:0000255" key="2">
    <source>
        <dbReference type="PROSITE-ProRule" id="PRU00532"/>
    </source>
</evidence>
<evidence type="ECO:0000269" key="3">
    <source>
    </source>
</evidence>
<evidence type="ECO:0000269" key="4">
    <source>
    </source>
</evidence>
<evidence type="ECO:0000269" key="5">
    <source>
    </source>
</evidence>
<evidence type="ECO:0000305" key="6"/>
<evidence type="ECO:0000312" key="7">
    <source>
        <dbReference type="EMBL" id="AAF03531.1"/>
    </source>
</evidence>
<evidence type="ECO:0000312" key="8">
    <source>
        <dbReference type="EMBL" id="AAF03532.1"/>
    </source>
</evidence>
<evidence type="ECO:0000312" key="9">
    <source>
        <dbReference type="PDB" id="1S5K"/>
    </source>
</evidence>
<evidence type="ECO:0000312" key="10">
    <source>
        <dbReference type="PDB" id="2VBQ"/>
    </source>
</evidence>
<evidence type="ECO:0007829" key="11">
    <source>
        <dbReference type="PDB" id="1S3Z"/>
    </source>
</evidence>
<comment type="function">
    <text evidence="3 4">Catalyzes the transfer of an acetyl group from acetyl-CoA to the 6'-amino group of aminoglycoside molecules conferring resistance to antibiotics containing the purpurosamine ring including amikacin, tobramycin, dibekacin and ribostamycin. Able to acetylate eukaryotic histone proteins.</text>
</comment>
<comment type="catalytic activity">
    <reaction evidence="3 4 5">
        <text>kanamycin B + acetyl-CoA = N(6')-acetylkanamycin B + CoA + H(+)</text>
        <dbReference type="Rhea" id="RHEA:16449"/>
        <dbReference type="ChEBI" id="CHEBI:15378"/>
        <dbReference type="ChEBI" id="CHEBI:57287"/>
        <dbReference type="ChEBI" id="CHEBI:57288"/>
        <dbReference type="ChEBI" id="CHEBI:58390"/>
        <dbReference type="ChEBI" id="CHEBI:58549"/>
        <dbReference type="EC" id="2.3.1.82"/>
    </reaction>
</comment>
<comment type="subunit">
    <text evidence="4 5">Homodimer.</text>
</comment>
<comment type="caution">
    <text evidence="3">Strain BM4361 does not express or weakly expresses aminoglycoside resistance gene and is thus aminoglycoside-sensitive. Strain BM4362 expresses it due to a chromosomal deletion leading to aminoglycoside resistance.</text>
</comment>
<sequence>MDIRQMNKTHLEHWRGLRKQLWPGHPDDAHLADGEEILQADHLASFIAMADGVAIGFADASIRHDYVNGCDSSPVVFLEGIFVLPSFRQRGVAKQLIAAVQRWGTNKGCREMASDTSPENTISQKVHQALGFEETERVIFYRKRC</sequence>
<keyword id="KW-0002">3D-structure</keyword>
<keyword id="KW-0012">Acyltransferase</keyword>
<keyword id="KW-0046">Antibiotic resistance</keyword>
<keyword id="KW-0808">Transferase</keyword>
<protein>
    <recommendedName>
        <fullName evidence="1">Aminoglycoside N(6')-acetyltransferase type 1</fullName>
        <ecNumber evidence="3 4">2.3.1.82</ecNumber>
    </recommendedName>
    <alternativeName>
        <fullName evidence="1">AAC(6')-Iy</fullName>
    </alternativeName>
    <alternativeName>
        <fullName evidence="1">Aminoglycoside resistance protein</fullName>
    </alternativeName>
</protein>
<feature type="chain" id="PRO_0000416829" description="Aminoglycoside N(6')-acetyltransferase type 1">
    <location>
        <begin position="1"/>
        <end position="145"/>
    </location>
</feature>
<feature type="domain" description="N-acetyltransferase" evidence="2">
    <location>
        <begin position="1"/>
        <end position="145"/>
    </location>
</feature>
<feature type="binding site" evidence="4">
    <location>
        <position position="22"/>
    </location>
    <ligand>
        <name>substrate</name>
    </ligand>
</feature>
<feature type="binding site" evidence="4 5">
    <location>
        <position position="25"/>
    </location>
    <ligand>
        <name>substrate</name>
    </ligand>
</feature>
<feature type="binding site" evidence="4 5">
    <location>
        <position position="66"/>
    </location>
    <ligand>
        <name>substrate</name>
    </ligand>
</feature>
<feature type="binding site" evidence="4 5">
    <location>
        <position position="79"/>
    </location>
    <ligand>
        <name>substrate</name>
    </ligand>
</feature>
<feature type="binding site" evidence="4 5">
    <location>
        <begin position="81"/>
        <end position="83"/>
    </location>
    <ligand>
        <name>acetyl-CoA</name>
        <dbReference type="ChEBI" id="CHEBI:57288"/>
    </ligand>
</feature>
<feature type="binding site" evidence="4 5">
    <location>
        <begin position="89"/>
        <end position="94"/>
    </location>
    <ligand>
        <name>acetyl-CoA</name>
        <dbReference type="ChEBI" id="CHEBI:57288"/>
    </ligand>
</feature>
<feature type="binding site" evidence="4 5">
    <location>
        <position position="115"/>
    </location>
    <ligand>
        <name>substrate</name>
    </ligand>
</feature>
<feature type="binding site" evidence="4 5">
    <location>
        <position position="120"/>
    </location>
    <ligand>
        <name>acetyl-CoA</name>
        <dbReference type="ChEBI" id="CHEBI:57288"/>
    </ligand>
</feature>
<feature type="binding site" evidence="4 5">
    <location>
        <position position="136"/>
    </location>
    <ligand>
        <name>substrate</name>
    </ligand>
</feature>
<feature type="strand" evidence="11">
    <location>
        <begin position="1"/>
        <end position="5"/>
    </location>
</feature>
<feature type="helix" evidence="11">
    <location>
        <begin position="8"/>
        <end position="10"/>
    </location>
</feature>
<feature type="helix" evidence="11">
    <location>
        <begin position="11"/>
        <end position="21"/>
    </location>
</feature>
<feature type="helix" evidence="11">
    <location>
        <begin position="27"/>
        <end position="39"/>
    </location>
</feature>
<feature type="strand" evidence="11">
    <location>
        <begin position="41"/>
        <end position="50"/>
    </location>
</feature>
<feature type="strand" evidence="11">
    <location>
        <begin position="53"/>
        <end position="63"/>
    </location>
</feature>
<feature type="strand" evidence="11">
    <location>
        <begin position="71"/>
        <end position="83"/>
    </location>
</feature>
<feature type="helix" evidence="11">
    <location>
        <begin position="85"/>
        <end position="87"/>
    </location>
</feature>
<feature type="strand" evidence="11">
    <location>
        <begin position="89"/>
        <end position="91"/>
    </location>
</feature>
<feature type="helix" evidence="11">
    <location>
        <begin position="92"/>
        <end position="106"/>
    </location>
</feature>
<feature type="strand" evidence="11">
    <location>
        <begin position="110"/>
        <end position="116"/>
    </location>
</feature>
<feature type="helix" evidence="11">
    <location>
        <begin position="121"/>
        <end position="129"/>
    </location>
</feature>
<feature type="strand" evidence="11">
    <location>
        <begin position="133"/>
        <end position="144"/>
    </location>
</feature>
<accession>Q9R381</accession>
<reference evidence="6 8" key="1">
    <citation type="journal article" date="1999" name="J. Bacteriol.">
        <title>Activation of the cryptic aac(6')-Iy aminoglycoside resistance gene of Salmonella by a chromosomal deletion generating a transcriptional fusion.</title>
        <authorList>
            <person name="Magnet S."/>
            <person name="Courvalin P."/>
            <person name="Lambert T."/>
        </authorList>
    </citation>
    <scope>NUCLEOTIDE SEQUENCE [GENOMIC DNA]</scope>
    <scope>FUNCTION</scope>
    <scope>CATALYTIC ACTIVITY</scope>
    <scope>SUBSTRATE SPECIFICITY</scope>
    <source>
        <strain evidence="7">BM4361</strain>
        <strain evidence="8">BM4362</strain>
    </source>
</reference>
<reference evidence="6 9" key="2">
    <citation type="journal article" date="2004" name="Chem. Biol.">
        <title>A bacterial acetyltransferase capable of regioselective N-acetylation of antibiotics and histones.</title>
        <authorList>
            <person name="Vetting M.W."/>
            <person name="Magnet S."/>
            <person name="Nieves E."/>
            <person name="Roderick S.L."/>
            <person name="Blanchard J.S."/>
        </authorList>
    </citation>
    <scope>X-RAY CRYSTALLOGRAPHY (2.00 ANGSTROMS) IN COMPLEXES WITH COENZYME A AND SUBSTRATE</scope>
    <scope>FUNCTION</scope>
    <scope>CATALYTIC ACTIVITY</scope>
    <scope>REACTION MECHANISM</scope>
    <scope>SUBUNIT</scope>
    <scope>IDENTIFICATION BY MASS SPECTROMETRY</scope>
</reference>
<reference evidence="6 10" key="3">
    <citation type="journal article" date="2008" name="Biochemistry">
        <title>Kinetic and structural analysis of bisubstrate inhibition of the Salmonella enterica aminoglycoside 6'-N-acetyltransferase.</title>
        <authorList>
            <person name="Magalhaes M.L."/>
            <person name="Vetting M.W."/>
            <person name="Gao F."/>
            <person name="Freiburger L."/>
            <person name="Auclair K."/>
            <person name="Blanchard J.S."/>
        </authorList>
    </citation>
    <scope>X-RAY CRYSTALLOGRAPHY (2.00 ANGSTROMS) IN COMPLEX WITH INHIBITOR</scope>
    <scope>CATALYTIC ACTIVITY</scope>
</reference>
<name>AAC6_SALEN</name>
<proteinExistence type="evidence at protein level"/>
<organism>
    <name type="scientific">Salmonella enteritidis</name>
    <dbReference type="NCBI Taxonomy" id="149539"/>
    <lineage>
        <taxon>Bacteria</taxon>
        <taxon>Pseudomonadati</taxon>
        <taxon>Pseudomonadota</taxon>
        <taxon>Gammaproteobacteria</taxon>
        <taxon>Enterobacterales</taxon>
        <taxon>Enterobacteriaceae</taxon>
        <taxon>Salmonella</taxon>
    </lineage>
</organism>